<dbReference type="EMBL" id="AB473724">
    <property type="protein sequence ID" value="BAH03389.1"/>
    <property type="molecule type" value="mRNA"/>
</dbReference>
<dbReference type="EMBL" id="BC151115">
    <property type="protein sequence ID" value="AAI51116.1"/>
    <property type="molecule type" value="mRNA"/>
</dbReference>
<dbReference type="EMBL" id="BC151117">
    <property type="protein sequence ID" value="AAI51118.1"/>
    <property type="molecule type" value="mRNA"/>
</dbReference>
<dbReference type="CCDS" id="CCDS51735.1"/>
<dbReference type="RefSeq" id="NP_001094956.1">
    <property type="nucleotide sequence ID" value="NM_001101486.2"/>
</dbReference>
<dbReference type="FunCoup" id="B2RXB0">
    <property type="interactions" value="187"/>
</dbReference>
<dbReference type="STRING" id="10090.ENSMUSP00000110941"/>
<dbReference type="PhosphoSitePlus" id="B2RXB0"/>
<dbReference type="PaxDb" id="10090-ENSMUSP00000110941"/>
<dbReference type="ProteomicsDB" id="337178"/>
<dbReference type="Antibodypedia" id="9588">
    <property type="antibodies" value="39 antibodies from 14 providers"/>
</dbReference>
<dbReference type="Ensembl" id="ENSMUST00000115286.4">
    <property type="protein sequence ID" value="ENSMUSP00000110941.3"/>
    <property type="gene ID" value="ENSMUSG00000079652.9"/>
</dbReference>
<dbReference type="GeneID" id="245884"/>
<dbReference type="KEGG" id="mmu:245884"/>
<dbReference type="UCSC" id="uc009bde.1">
    <property type="organism name" value="mouse"/>
</dbReference>
<dbReference type="AGR" id="MGI:2141439"/>
<dbReference type="CTD" id="346653"/>
<dbReference type="MGI" id="MGI:2141439">
    <property type="gene designation" value="Garin1a"/>
</dbReference>
<dbReference type="VEuPathDB" id="HostDB:ENSMUSG00000079652"/>
<dbReference type="eggNOG" id="ENOG502S7XV">
    <property type="taxonomic scope" value="Eukaryota"/>
</dbReference>
<dbReference type="GeneTree" id="ENSGT00940000162027"/>
<dbReference type="HOGENOM" id="CLU_069391_1_0_1"/>
<dbReference type="InParanoid" id="B2RXB0"/>
<dbReference type="OMA" id="RIEFTHC"/>
<dbReference type="OrthoDB" id="9834631at2759"/>
<dbReference type="PhylomeDB" id="B2RXB0"/>
<dbReference type="TreeFam" id="TF336050"/>
<dbReference type="BioGRID-ORCS" id="245884">
    <property type="hits" value="1 hit in 77 CRISPR screens"/>
</dbReference>
<dbReference type="PRO" id="PR:B2RXB0"/>
<dbReference type="Proteomes" id="UP000000589">
    <property type="component" value="Chromosome 6"/>
</dbReference>
<dbReference type="RNAct" id="B2RXB0">
    <property type="molecule type" value="protein"/>
</dbReference>
<dbReference type="Bgee" id="ENSMUSG00000079652">
    <property type="expression patterns" value="Expressed in spermatid and 48 other cell types or tissues"/>
</dbReference>
<dbReference type="ExpressionAtlas" id="B2RXB0">
    <property type="expression patterns" value="baseline and differential"/>
</dbReference>
<dbReference type="GO" id="GO:0005794">
    <property type="term" value="C:Golgi apparatus"/>
    <property type="evidence" value="ECO:0000314"/>
    <property type="project" value="UniProtKB"/>
</dbReference>
<dbReference type="GO" id="GO:0001675">
    <property type="term" value="P:acrosome assembly"/>
    <property type="evidence" value="ECO:0000315"/>
    <property type="project" value="UniProtKB"/>
</dbReference>
<dbReference type="InterPro" id="IPR022168">
    <property type="entry name" value="GARIL-like_Rab2B-bd"/>
</dbReference>
<dbReference type="PANTHER" id="PTHR22574">
    <property type="match status" value="1"/>
</dbReference>
<dbReference type="PANTHER" id="PTHR22574:SF10">
    <property type="entry name" value="GOLGI-ASSOCIATED RAB2 INTERACTOR PROTEIN 1A"/>
    <property type="match status" value="1"/>
</dbReference>
<dbReference type="Pfam" id="PF12480">
    <property type="entry name" value="GARIL_Rab2_bd"/>
    <property type="match status" value="1"/>
</dbReference>
<proteinExistence type="evidence at protein level"/>
<comment type="function">
    <text evidence="3">RAB2B effector protein required for accurate acrosome formation and normal male fertility.</text>
</comment>
<comment type="subunit">
    <text evidence="2">Interacts (via N-terminus) with RAB2B (in GTP-bound form).</text>
</comment>
<comment type="subcellular location">
    <subcellularLocation>
        <location evidence="2">Golgi apparatus</location>
    </subcellularLocation>
</comment>
<comment type="tissue specificity">
    <text evidence="3">Expressed in testis (at protein level).</text>
</comment>
<comment type="developmental stage">
    <text evidence="3">Expressed from day 21, around when spermiogenesis occurs (PubMed:34714330). Expression dramatically increases at the mid-round spermatid stage (steps 4-6) (PubMed:34714330).</text>
</comment>
<comment type="disruption phenotype">
    <text evidence="3">Mutant male fertility is significantly impaired compared with that of the controls (PubMed:34714330). Spermatozoa from mutant mice showed abnormal head shapes with an abnormal acrosome morphology (PubMed:34714330).</text>
</comment>
<comment type="similarity">
    <text evidence="5">Belongs to the GARIN family.</text>
</comment>
<organism evidence="6">
    <name type="scientific">Mus musculus</name>
    <name type="common">Mouse</name>
    <dbReference type="NCBI Taxonomy" id="10090"/>
    <lineage>
        <taxon>Eukaryota</taxon>
        <taxon>Metazoa</taxon>
        <taxon>Chordata</taxon>
        <taxon>Craniata</taxon>
        <taxon>Vertebrata</taxon>
        <taxon>Euteleostomi</taxon>
        <taxon>Mammalia</taxon>
        <taxon>Eutheria</taxon>
        <taxon>Euarchontoglires</taxon>
        <taxon>Glires</taxon>
        <taxon>Rodentia</taxon>
        <taxon>Myomorpha</taxon>
        <taxon>Muroidea</taxon>
        <taxon>Muridae</taxon>
        <taxon>Murinae</taxon>
        <taxon>Mus</taxon>
        <taxon>Mus</taxon>
    </lineage>
</organism>
<protein>
    <recommendedName>
        <fullName evidence="8">Golgi-associated RAB2 interactor protein 1A</fullName>
    </recommendedName>
</protein>
<accession>B2RXB0</accession>
<reference evidence="7" key="1">
    <citation type="journal article" date="2008" name="Mol. Cell. Proteomics">
        <title>Large scale screening for novel rab effectors reveals unexpected broad Rab binding specificity.</title>
        <authorList>
            <person name="Fukuda M."/>
            <person name="Kanno E."/>
            <person name="Ishibashi K."/>
            <person name="Itoh T."/>
        </authorList>
    </citation>
    <scope>NUCLEOTIDE SEQUENCE [MRNA]</scope>
    <scope>INTERACTION WITH RAB2B</scope>
    <scope>SUBCELLULAR LOCATION</scope>
    <source>
        <strain evidence="7">BALB/cJ</strain>
    </source>
</reference>
<reference key="2">
    <citation type="journal article" date="2009" name="PLoS Biol.">
        <title>Lineage-specific biology revealed by a finished genome assembly of the mouse.</title>
        <authorList>
            <person name="Church D.M."/>
            <person name="Goodstadt L."/>
            <person name="Hillier L.W."/>
            <person name="Zody M.C."/>
            <person name="Goldstein S."/>
            <person name="She X."/>
            <person name="Bult C.J."/>
            <person name="Agarwala R."/>
            <person name="Cherry J.L."/>
            <person name="DiCuccio M."/>
            <person name="Hlavina W."/>
            <person name="Kapustin Y."/>
            <person name="Meric P."/>
            <person name="Maglott D."/>
            <person name="Birtle Z."/>
            <person name="Marques A.C."/>
            <person name="Graves T."/>
            <person name="Zhou S."/>
            <person name="Teague B."/>
            <person name="Potamousis K."/>
            <person name="Churas C."/>
            <person name="Place M."/>
            <person name="Herschleb J."/>
            <person name="Runnheim R."/>
            <person name="Forrest D."/>
            <person name="Amos-Landgraf J."/>
            <person name="Schwartz D.C."/>
            <person name="Cheng Z."/>
            <person name="Lindblad-Toh K."/>
            <person name="Eichler E.E."/>
            <person name="Ponting C.P."/>
        </authorList>
    </citation>
    <scope>NUCLEOTIDE SEQUENCE [LARGE SCALE GENOMIC DNA]</scope>
    <source>
        <strain>C57BL/6J</strain>
    </source>
</reference>
<reference evidence="6" key="3">
    <citation type="journal article" date="2004" name="Genome Res.">
        <title>The status, quality, and expansion of the NIH full-length cDNA project: the Mammalian Gene Collection (MGC).</title>
        <authorList>
            <consortium name="The MGC Project Team"/>
        </authorList>
    </citation>
    <scope>NUCLEOTIDE SEQUENCE [LARGE SCALE MRNA]</scope>
    <source>
        <tissue evidence="6">Brain</tissue>
    </source>
</reference>
<reference key="4">
    <citation type="journal article" date="2021" name="Development">
        <title>FAM71F1 binds to RAB2A and RAB2B and is essential for acrosome formation and male fertility in mice.</title>
        <authorList>
            <person name="Morohoshi A."/>
            <person name="Miyata H."/>
            <person name="Oyama Y."/>
            <person name="Oura S."/>
            <person name="Noda T."/>
            <person name="Ikawa M."/>
        </authorList>
    </citation>
    <scope>FUNCTION</scope>
    <scope>TISSUE SPECIFICITY</scope>
    <scope>DISRUPTION PHENOTYPE</scope>
    <scope>DEVELOPMENTAL STAGE</scope>
</reference>
<gene>
    <name evidence="8" type="primary">Garin1a</name>
    <name type="synonym">Fam137b</name>
    <name evidence="8" type="synonym">Fam71f2</name>
    <name evidence="4" type="synonym">GARI</name>
</gene>
<keyword id="KW-0333">Golgi apparatus</keyword>
<keyword id="KW-1185">Reference proteome</keyword>
<feature type="chain" id="PRO_0000455123" description="Golgi-associated RAB2 interactor protein 1A">
    <location>
        <begin position="1"/>
        <end position="297"/>
    </location>
</feature>
<feature type="region of interest" description="Disordered" evidence="1">
    <location>
        <begin position="226"/>
        <end position="257"/>
    </location>
</feature>
<feature type="compositionally biased region" description="Polar residues" evidence="1">
    <location>
        <begin position="240"/>
        <end position="257"/>
    </location>
</feature>
<sequence length="297" mass="32845">MSKIRGLPPAIRDPGPGVELGVVDGLLCQLIHSPEFNLFSDSVVFESTFIQVTKQGNWMDAYERSATMILGVTSSVPSLPLPNILLMANVTWPHGPFSTCSTLGAPVITLSRILPLKYVELQIYDRTQRILRVRTVTEKIYYLRLHEKHPQAVFQFWIRLVKILQKGLSITTKDPRIQFTHCLVPKMSNSSTETATESSLPASSQNSEAIMLLAAERNSSSLLELSNRHQTSRDRHTDTATETDNSGNCKSTPLVASSASMPMRAALTHSLWEQEDSNENFLQAPVASSLGENLLGP</sequence>
<evidence type="ECO:0000256" key="1">
    <source>
        <dbReference type="SAM" id="MobiDB-lite"/>
    </source>
</evidence>
<evidence type="ECO:0000269" key="2">
    <source>
    </source>
</evidence>
<evidence type="ECO:0000269" key="3">
    <source>
    </source>
</evidence>
<evidence type="ECO:0000303" key="4">
    <source>
    </source>
</evidence>
<evidence type="ECO:0000305" key="5"/>
<evidence type="ECO:0000312" key="6">
    <source>
        <dbReference type="EMBL" id="AAI51116.1"/>
    </source>
</evidence>
<evidence type="ECO:0000312" key="7">
    <source>
        <dbReference type="EMBL" id="BAH03389.1"/>
    </source>
</evidence>
<evidence type="ECO:0000312" key="8">
    <source>
        <dbReference type="MGI" id="MGI:2141439"/>
    </source>
</evidence>
<name>GAR1A_MOUSE</name>